<reference key="1">
    <citation type="journal article" date="2010" name="J. Bacteriol.">
        <title>Genome sequence of the dioxin-mineralizing bacterium Sphingomonas wittichii RW1.</title>
        <authorList>
            <person name="Miller T.R."/>
            <person name="Delcher A.L."/>
            <person name="Salzberg S.L."/>
            <person name="Saunders E."/>
            <person name="Detter J.C."/>
            <person name="Halden R.U."/>
        </authorList>
    </citation>
    <scope>NUCLEOTIDE SEQUENCE [LARGE SCALE GENOMIC DNA]</scope>
    <source>
        <strain>DSM 6014 / CCUG 31198 / JCM 15750 / NBRC 105917 / EY 4224 / RW1</strain>
    </source>
</reference>
<gene>
    <name evidence="1" type="primary">plsX</name>
    <name type="ordered locus">Swit_3555</name>
</gene>
<evidence type="ECO:0000255" key="1">
    <source>
        <dbReference type="HAMAP-Rule" id="MF_00019"/>
    </source>
</evidence>
<protein>
    <recommendedName>
        <fullName evidence="1">Phosphate acyltransferase</fullName>
        <ecNumber evidence="1">2.3.1.274</ecNumber>
    </recommendedName>
    <alternativeName>
        <fullName evidence="1">Acyl-ACP phosphotransacylase</fullName>
    </alternativeName>
    <alternativeName>
        <fullName evidence="1">Acyl-[acyl-carrier-protein]--phosphate acyltransferase</fullName>
    </alternativeName>
    <alternativeName>
        <fullName evidence="1">Phosphate-acyl-ACP acyltransferase</fullName>
    </alternativeName>
</protein>
<proteinExistence type="inferred from homology"/>
<dbReference type="EC" id="2.3.1.274" evidence="1"/>
<dbReference type="EMBL" id="CP000699">
    <property type="protein sequence ID" value="ABQ69901.1"/>
    <property type="molecule type" value="Genomic_DNA"/>
</dbReference>
<dbReference type="SMR" id="A5VC85"/>
<dbReference type="STRING" id="392499.Swit_3555"/>
<dbReference type="PaxDb" id="392499-Swit_3555"/>
<dbReference type="KEGG" id="swi:Swit_3555"/>
<dbReference type="eggNOG" id="COG0416">
    <property type="taxonomic scope" value="Bacteria"/>
</dbReference>
<dbReference type="HOGENOM" id="CLU_039379_1_0_5"/>
<dbReference type="OrthoDB" id="9806408at2"/>
<dbReference type="UniPathway" id="UPA00085"/>
<dbReference type="Proteomes" id="UP000001989">
    <property type="component" value="Chromosome"/>
</dbReference>
<dbReference type="GO" id="GO:0005737">
    <property type="term" value="C:cytoplasm"/>
    <property type="evidence" value="ECO:0007669"/>
    <property type="project" value="UniProtKB-SubCell"/>
</dbReference>
<dbReference type="GO" id="GO:0043811">
    <property type="term" value="F:phosphate:acyl-[acyl carrier protein] acyltransferase activity"/>
    <property type="evidence" value="ECO:0007669"/>
    <property type="project" value="UniProtKB-UniRule"/>
</dbReference>
<dbReference type="GO" id="GO:0006633">
    <property type="term" value="P:fatty acid biosynthetic process"/>
    <property type="evidence" value="ECO:0007669"/>
    <property type="project" value="UniProtKB-UniRule"/>
</dbReference>
<dbReference type="GO" id="GO:0008654">
    <property type="term" value="P:phospholipid biosynthetic process"/>
    <property type="evidence" value="ECO:0007669"/>
    <property type="project" value="UniProtKB-KW"/>
</dbReference>
<dbReference type="Gene3D" id="3.40.718.10">
    <property type="entry name" value="Isopropylmalate Dehydrogenase"/>
    <property type="match status" value="1"/>
</dbReference>
<dbReference type="HAMAP" id="MF_00019">
    <property type="entry name" value="PlsX"/>
    <property type="match status" value="1"/>
</dbReference>
<dbReference type="InterPro" id="IPR003664">
    <property type="entry name" value="FA_synthesis"/>
</dbReference>
<dbReference type="InterPro" id="IPR012281">
    <property type="entry name" value="Phospholipid_synth_PlsX-like"/>
</dbReference>
<dbReference type="NCBIfam" id="TIGR00182">
    <property type="entry name" value="plsX"/>
    <property type="match status" value="1"/>
</dbReference>
<dbReference type="PANTHER" id="PTHR30100">
    <property type="entry name" value="FATTY ACID/PHOSPHOLIPID SYNTHESIS PROTEIN PLSX"/>
    <property type="match status" value="1"/>
</dbReference>
<dbReference type="PANTHER" id="PTHR30100:SF1">
    <property type="entry name" value="PHOSPHATE ACYLTRANSFERASE"/>
    <property type="match status" value="1"/>
</dbReference>
<dbReference type="Pfam" id="PF02504">
    <property type="entry name" value="FA_synthesis"/>
    <property type="match status" value="1"/>
</dbReference>
<dbReference type="PIRSF" id="PIRSF002465">
    <property type="entry name" value="Phsphlp_syn_PlsX"/>
    <property type="match status" value="1"/>
</dbReference>
<dbReference type="SUPFAM" id="SSF53659">
    <property type="entry name" value="Isocitrate/Isopropylmalate dehydrogenase-like"/>
    <property type="match status" value="1"/>
</dbReference>
<feature type="chain" id="PRO_1000057179" description="Phosphate acyltransferase">
    <location>
        <begin position="1"/>
        <end position="348"/>
    </location>
</feature>
<name>PLSX_RHIWR</name>
<keyword id="KW-0963">Cytoplasm</keyword>
<keyword id="KW-0444">Lipid biosynthesis</keyword>
<keyword id="KW-0443">Lipid metabolism</keyword>
<keyword id="KW-0594">Phospholipid biosynthesis</keyword>
<keyword id="KW-1208">Phospholipid metabolism</keyword>
<keyword id="KW-1185">Reference proteome</keyword>
<keyword id="KW-0808">Transferase</keyword>
<comment type="function">
    <text evidence="1">Catalyzes the reversible formation of acyl-phosphate (acyl-PO(4)) from acyl-[acyl-carrier-protein] (acyl-ACP). This enzyme utilizes acyl-ACP as fatty acyl donor, but not acyl-CoA.</text>
</comment>
<comment type="catalytic activity">
    <reaction evidence="1">
        <text>a fatty acyl-[ACP] + phosphate = an acyl phosphate + holo-[ACP]</text>
        <dbReference type="Rhea" id="RHEA:42292"/>
        <dbReference type="Rhea" id="RHEA-COMP:9685"/>
        <dbReference type="Rhea" id="RHEA-COMP:14125"/>
        <dbReference type="ChEBI" id="CHEBI:43474"/>
        <dbReference type="ChEBI" id="CHEBI:59918"/>
        <dbReference type="ChEBI" id="CHEBI:64479"/>
        <dbReference type="ChEBI" id="CHEBI:138651"/>
        <dbReference type="EC" id="2.3.1.274"/>
    </reaction>
</comment>
<comment type="pathway">
    <text evidence="1">Lipid metabolism; phospholipid metabolism.</text>
</comment>
<comment type="subunit">
    <text evidence="1">Homodimer. Probably interacts with PlsY.</text>
</comment>
<comment type="subcellular location">
    <subcellularLocation>
        <location evidence="1">Cytoplasm</location>
    </subcellularLocation>
    <text evidence="1">Associated with the membrane possibly through PlsY.</text>
</comment>
<comment type="similarity">
    <text evidence="1">Belongs to the PlsX family.</text>
</comment>
<sequence>MDEAPRIAIDAMGGDGGPATIIAGAAQARDRDSSLRLTFTGDETVIRAEMARFPQLADSIVVHCDDVITGDDKPSQAIRRTKSSSMGAAILAVKAGEAAAALSAGNTGALMAIAKLSLRTMHGIDRPALAALMPTLGDNDLVMLDLGANTDCDARNLVEFAVMGAAYSRLALGIESPRVRLLNIGTEELKGTGELKEAAAMLRQQTGGAWRFDGFIEADRLGRGEADVIVSDGFSGNIALKSIEGTARFITDLLRRAFSSSLRSKAGFILSRPAFALLRHHLDPNNHNGAVFLGLNGLVVKSHGGADEKGIANAIAVAAKIAREDLTRRITDDLEDFRSHAVQTEGVA</sequence>
<organism>
    <name type="scientific">Rhizorhabdus wittichii (strain DSM 6014 / CCUG 31198 / JCM 15750 / NBRC 105917 / EY 4224 / RW1)</name>
    <name type="common">Sphingomonas wittichii</name>
    <dbReference type="NCBI Taxonomy" id="392499"/>
    <lineage>
        <taxon>Bacteria</taxon>
        <taxon>Pseudomonadati</taxon>
        <taxon>Pseudomonadota</taxon>
        <taxon>Alphaproteobacteria</taxon>
        <taxon>Sphingomonadales</taxon>
        <taxon>Sphingomonadaceae</taxon>
        <taxon>Rhizorhabdus</taxon>
    </lineage>
</organism>
<accession>A5VC85</accession>